<keyword id="KW-0963">Cytoplasm</keyword>
<keyword id="KW-0269">Exonuclease</keyword>
<keyword id="KW-0378">Hydrolase</keyword>
<keyword id="KW-0540">Nuclease</keyword>
<name>EX7L_BACC0</name>
<gene>
    <name evidence="1" type="primary">xseA</name>
    <name type="ordered locus">BCAH820_4200</name>
</gene>
<protein>
    <recommendedName>
        <fullName evidence="1">Exodeoxyribonuclease 7 large subunit</fullName>
        <ecNumber evidence="1">3.1.11.6</ecNumber>
    </recommendedName>
    <alternativeName>
        <fullName evidence="1">Exodeoxyribonuclease VII large subunit</fullName>
        <shortName evidence="1">Exonuclease VII large subunit</shortName>
    </alternativeName>
</protein>
<dbReference type="EC" id="3.1.11.6" evidence="1"/>
<dbReference type="EMBL" id="CP001283">
    <property type="protein sequence ID" value="ACK92241.1"/>
    <property type="molecule type" value="Genomic_DNA"/>
</dbReference>
<dbReference type="RefSeq" id="WP_000415260.1">
    <property type="nucleotide sequence ID" value="NC_011773.1"/>
</dbReference>
<dbReference type="SMR" id="B7JM31"/>
<dbReference type="KEGG" id="bcu:BCAH820_4200"/>
<dbReference type="HOGENOM" id="CLU_023625_3_1_9"/>
<dbReference type="Proteomes" id="UP000001363">
    <property type="component" value="Chromosome"/>
</dbReference>
<dbReference type="GO" id="GO:0005737">
    <property type="term" value="C:cytoplasm"/>
    <property type="evidence" value="ECO:0007669"/>
    <property type="project" value="UniProtKB-SubCell"/>
</dbReference>
<dbReference type="GO" id="GO:0009318">
    <property type="term" value="C:exodeoxyribonuclease VII complex"/>
    <property type="evidence" value="ECO:0007669"/>
    <property type="project" value="InterPro"/>
</dbReference>
<dbReference type="GO" id="GO:0008855">
    <property type="term" value="F:exodeoxyribonuclease VII activity"/>
    <property type="evidence" value="ECO:0007669"/>
    <property type="project" value="UniProtKB-UniRule"/>
</dbReference>
<dbReference type="GO" id="GO:0003676">
    <property type="term" value="F:nucleic acid binding"/>
    <property type="evidence" value="ECO:0007669"/>
    <property type="project" value="InterPro"/>
</dbReference>
<dbReference type="GO" id="GO:0006308">
    <property type="term" value="P:DNA catabolic process"/>
    <property type="evidence" value="ECO:0007669"/>
    <property type="project" value="UniProtKB-UniRule"/>
</dbReference>
<dbReference type="CDD" id="cd04489">
    <property type="entry name" value="ExoVII_LU_OBF"/>
    <property type="match status" value="1"/>
</dbReference>
<dbReference type="HAMAP" id="MF_00378">
    <property type="entry name" value="Exonuc_7_L"/>
    <property type="match status" value="1"/>
</dbReference>
<dbReference type="InterPro" id="IPR003753">
    <property type="entry name" value="Exonuc_VII_L"/>
</dbReference>
<dbReference type="InterPro" id="IPR020579">
    <property type="entry name" value="Exonuc_VII_lsu_C"/>
</dbReference>
<dbReference type="InterPro" id="IPR025824">
    <property type="entry name" value="OB-fold_nuc-bd_dom"/>
</dbReference>
<dbReference type="NCBIfam" id="TIGR00237">
    <property type="entry name" value="xseA"/>
    <property type="match status" value="1"/>
</dbReference>
<dbReference type="PANTHER" id="PTHR30008">
    <property type="entry name" value="EXODEOXYRIBONUCLEASE 7 LARGE SUBUNIT"/>
    <property type="match status" value="1"/>
</dbReference>
<dbReference type="PANTHER" id="PTHR30008:SF0">
    <property type="entry name" value="EXODEOXYRIBONUCLEASE 7 LARGE SUBUNIT"/>
    <property type="match status" value="1"/>
</dbReference>
<dbReference type="Pfam" id="PF02601">
    <property type="entry name" value="Exonuc_VII_L"/>
    <property type="match status" value="1"/>
</dbReference>
<dbReference type="Pfam" id="PF13742">
    <property type="entry name" value="tRNA_anti_2"/>
    <property type="match status" value="1"/>
</dbReference>
<sequence>MEKQYLTVTALTRYIKTKIEYDPHLQSVWLKGEISNFKNHSRGHMYFTLKDENARIAAVMFAGHNRNIKFRPENGMKVLVKGKISVYEASGSYQIYIQDMQPDGIGNLHLAYEQLKVRLEEEGLFSQVYKKTIPPYAKTIGVITSPTGAAIRDIITTIKRRYPIGNVIVFPVLVQGESAAPSIVQAIRTANEMEEIDVLIVGRGGGSIEELWAFNEEMVARAIFKSEIPIISAVGHETDFTIADFVADLRAPTPTAAAELAAPNIIELQEKVLQRTLRLQRAMRELVHKKEEKLQVLQKSYAFRYPRQVYEQKEEQLDRALEQLVLAKERYIDKKVNQLKQLSFYLEKHHPSQKIMQTKVAVETLQKQLQREMQTLLQTKEFAFVRAAQKLEALSPLKVMMRGYGLVYDEEKQVLKSVKDVSLGDAVSVQLQDGILDCSVSGIEERELNNGK</sequence>
<proteinExistence type="inferred from homology"/>
<organism>
    <name type="scientific">Bacillus cereus (strain AH820)</name>
    <dbReference type="NCBI Taxonomy" id="405535"/>
    <lineage>
        <taxon>Bacteria</taxon>
        <taxon>Bacillati</taxon>
        <taxon>Bacillota</taxon>
        <taxon>Bacilli</taxon>
        <taxon>Bacillales</taxon>
        <taxon>Bacillaceae</taxon>
        <taxon>Bacillus</taxon>
        <taxon>Bacillus cereus group</taxon>
    </lineage>
</organism>
<feature type="chain" id="PRO_1000122038" description="Exodeoxyribonuclease 7 large subunit">
    <location>
        <begin position="1"/>
        <end position="452"/>
    </location>
</feature>
<comment type="function">
    <text evidence="1">Bidirectionally degrades single-stranded DNA into large acid-insoluble oligonucleotides, which are then degraded further into small acid-soluble oligonucleotides.</text>
</comment>
<comment type="catalytic activity">
    <reaction evidence="1">
        <text>Exonucleolytic cleavage in either 5'- to 3'- or 3'- to 5'-direction to yield nucleoside 5'-phosphates.</text>
        <dbReference type="EC" id="3.1.11.6"/>
    </reaction>
</comment>
<comment type="subunit">
    <text evidence="1">Heterooligomer composed of large and small subunits.</text>
</comment>
<comment type="subcellular location">
    <subcellularLocation>
        <location evidence="1">Cytoplasm</location>
    </subcellularLocation>
</comment>
<comment type="similarity">
    <text evidence="1">Belongs to the XseA family.</text>
</comment>
<reference key="1">
    <citation type="submission" date="2008-10" db="EMBL/GenBank/DDBJ databases">
        <title>Genome sequence of Bacillus cereus AH820.</title>
        <authorList>
            <person name="Dodson R.J."/>
            <person name="Durkin A.S."/>
            <person name="Rosovitz M.J."/>
            <person name="Rasko D.A."/>
            <person name="Hoffmaster A."/>
            <person name="Ravel J."/>
            <person name="Sutton G."/>
        </authorList>
    </citation>
    <scope>NUCLEOTIDE SEQUENCE [LARGE SCALE GENOMIC DNA]</scope>
    <source>
        <strain>AH820</strain>
    </source>
</reference>
<evidence type="ECO:0000255" key="1">
    <source>
        <dbReference type="HAMAP-Rule" id="MF_00378"/>
    </source>
</evidence>
<accession>B7JM31</accession>